<name>RR15_AETGR</name>
<protein>
    <recommendedName>
        <fullName evidence="2">Small ribosomal subunit protein uS15c</fullName>
    </recommendedName>
    <alternativeName>
        <fullName>30S ribosomal protein S15, chloroplastic</fullName>
    </alternativeName>
</protein>
<reference key="1">
    <citation type="submission" date="2007-03" db="EMBL/GenBank/DDBJ databases">
        <title>Sequencing analysis of Aethionema grandiflorum chloroplast DNA.</title>
        <authorList>
            <person name="Hosouchi T."/>
            <person name="Tsuruoka H."/>
            <person name="Kotani H."/>
        </authorList>
    </citation>
    <scope>NUCLEOTIDE SEQUENCE [LARGE SCALE GENOMIC DNA]</scope>
</reference>
<gene>
    <name type="primary">rps15</name>
</gene>
<geneLocation type="chloroplast"/>
<keyword id="KW-0150">Chloroplast</keyword>
<keyword id="KW-0934">Plastid</keyword>
<keyword id="KW-0687">Ribonucleoprotein</keyword>
<keyword id="KW-0689">Ribosomal protein</keyword>
<organism>
    <name type="scientific">Aethionema grandiflorum</name>
    <name type="common">Persian stone-cress</name>
    <dbReference type="NCBI Taxonomy" id="72657"/>
    <lineage>
        <taxon>Eukaryota</taxon>
        <taxon>Viridiplantae</taxon>
        <taxon>Streptophyta</taxon>
        <taxon>Embryophyta</taxon>
        <taxon>Tracheophyta</taxon>
        <taxon>Spermatophyta</taxon>
        <taxon>Magnoliopsida</taxon>
        <taxon>eudicotyledons</taxon>
        <taxon>Gunneridae</taxon>
        <taxon>Pentapetalae</taxon>
        <taxon>rosids</taxon>
        <taxon>malvids</taxon>
        <taxon>Brassicales</taxon>
        <taxon>Brassicaceae</taxon>
        <taxon>Aethionemeae</taxon>
        <taxon>Aethionema</taxon>
    </lineage>
</organism>
<comment type="subunit">
    <text evidence="1">Part of the 30S ribosomal subunit.</text>
</comment>
<comment type="subcellular location">
    <subcellularLocation>
        <location>Plastid</location>
        <location>Chloroplast</location>
    </subcellularLocation>
</comment>
<comment type="similarity">
    <text evidence="2">Belongs to the universal ribosomal protein uS15 family.</text>
</comment>
<dbReference type="EMBL" id="AP009367">
    <property type="protein sequence ID" value="BAF49912.1"/>
    <property type="molecule type" value="Genomic_DNA"/>
</dbReference>
<dbReference type="RefSeq" id="YP_001123087.1">
    <property type="nucleotide sequence ID" value="NC_009266.1"/>
</dbReference>
<dbReference type="SMR" id="A4QJQ7"/>
<dbReference type="GeneID" id="4962316"/>
<dbReference type="GO" id="GO:0009507">
    <property type="term" value="C:chloroplast"/>
    <property type="evidence" value="ECO:0007669"/>
    <property type="project" value="UniProtKB-SubCell"/>
</dbReference>
<dbReference type="GO" id="GO:1990904">
    <property type="term" value="C:ribonucleoprotein complex"/>
    <property type="evidence" value="ECO:0007669"/>
    <property type="project" value="UniProtKB-KW"/>
</dbReference>
<dbReference type="GO" id="GO:0005840">
    <property type="term" value="C:ribosome"/>
    <property type="evidence" value="ECO:0007669"/>
    <property type="project" value="UniProtKB-KW"/>
</dbReference>
<dbReference type="GO" id="GO:0003735">
    <property type="term" value="F:structural constituent of ribosome"/>
    <property type="evidence" value="ECO:0007669"/>
    <property type="project" value="InterPro"/>
</dbReference>
<dbReference type="GO" id="GO:0006412">
    <property type="term" value="P:translation"/>
    <property type="evidence" value="ECO:0007669"/>
    <property type="project" value="UniProtKB-UniRule"/>
</dbReference>
<dbReference type="CDD" id="cd00353">
    <property type="entry name" value="Ribosomal_S15p_S13e"/>
    <property type="match status" value="1"/>
</dbReference>
<dbReference type="Gene3D" id="1.10.287.10">
    <property type="entry name" value="S15/NS1, RNA-binding"/>
    <property type="match status" value="1"/>
</dbReference>
<dbReference type="HAMAP" id="MF_01343_B">
    <property type="entry name" value="Ribosomal_uS15_B"/>
    <property type="match status" value="1"/>
</dbReference>
<dbReference type="InterPro" id="IPR000589">
    <property type="entry name" value="Ribosomal_uS15"/>
</dbReference>
<dbReference type="InterPro" id="IPR005290">
    <property type="entry name" value="Ribosomal_uS15_bac-type"/>
</dbReference>
<dbReference type="InterPro" id="IPR009068">
    <property type="entry name" value="uS15_NS1_RNA-bd_sf"/>
</dbReference>
<dbReference type="NCBIfam" id="TIGR00952">
    <property type="entry name" value="S15_bact"/>
    <property type="match status" value="1"/>
</dbReference>
<dbReference type="PANTHER" id="PTHR23321">
    <property type="entry name" value="RIBOSOMAL PROTEIN S15, BACTERIAL AND ORGANELLAR"/>
    <property type="match status" value="1"/>
</dbReference>
<dbReference type="PANTHER" id="PTHR23321:SF26">
    <property type="entry name" value="SMALL RIBOSOMAL SUBUNIT PROTEIN US15M"/>
    <property type="match status" value="1"/>
</dbReference>
<dbReference type="Pfam" id="PF00312">
    <property type="entry name" value="Ribosomal_S15"/>
    <property type="match status" value="1"/>
</dbReference>
<dbReference type="SMART" id="SM01387">
    <property type="entry name" value="Ribosomal_S15"/>
    <property type="match status" value="1"/>
</dbReference>
<dbReference type="SUPFAM" id="SSF47060">
    <property type="entry name" value="S15/NS1 RNA-binding domain"/>
    <property type="match status" value="1"/>
</dbReference>
<dbReference type="PROSITE" id="PS00362">
    <property type="entry name" value="RIBOSOMAL_S15"/>
    <property type="match status" value="1"/>
</dbReference>
<feature type="chain" id="PRO_0000354234" description="Small ribosomal subunit protein uS15c">
    <location>
        <begin position="1"/>
        <end position="88"/>
    </location>
</feature>
<accession>A4QJQ7</accession>
<proteinExistence type="inferred from homology"/>
<sequence>MIKNAFISLQEKKEESRGSVEFQVFSFTNKIRRLTSHLELHRKDYLSQRGLRKILGKRQRLLVYLSKKNRVRYKDLINKLNIRELKTR</sequence>
<evidence type="ECO:0000250" key="1"/>
<evidence type="ECO:0000305" key="2"/>